<proteinExistence type="inferred from homology"/>
<keyword id="KW-0665">Pyrimidine biosynthesis</keyword>
<keyword id="KW-0808">Transferase</keyword>
<feature type="chain" id="PRO_0000321166" description="Aspartate carbamoyltransferase catalytic subunit">
    <location>
        <begin position="1"/>
        <end position="311"/>
    </location>
</feature>
<feature type="binding site" evidence="1">
    <location>
        <position position="59"/>
    </location>
    <ligand>
        <name>carbamoyl phosphate</name>
        <dbReference type="ChEBI" id="CHEBI:58228"/>
    </ligand>
</feature>
<feature type="binding site" evidence="1">
    <location>
        <position position="60"/>
    </location>
    <ligand>
        <name>carbamoyl phosphate</name>
        <dbReference type="ChEBI" id="CHEBI:58228"/>
    </ligand>
</feature>
<feature type="binding site" evidence="1">
    <location>
        <position position="87"/>
    </location>
    <ligand>
        <name>L-aspartate</name>
        <dbReference type="ChEBI" id="CHEBI:29991"/>
    </ligand>
</feature>
<feature type="binding site" evidence="1">
    <location>
        <position position="109"/>
    </location>
    <ligand>
        <name>carbamoyl phosphate</name>
        <dbReference type="ChEBI" id="CHEBI:58228"/>
    </ligand>
</feature>
<feature type="binding site" evidence="1">
    <location>
        <position position="139"/>
    </location>
    <ligand>
        <name>carbamoyl phosphate</name>
        <dbReference type="ChEBI" id="CHEBI:58228"/>
    </ligand>
</feature>
<feature type="binding site" evidence="1">
    <location>
        <position position="142"/>
    </location>
    <ligand>
        <name>carbamoyl phosphate</name>
        <dbReference type="ChEBI" id="CHEBI:58228"/>
    </ligand>
</feature>
<feature type="binding site" evidence="1">
    <location>
        <position position="172"/>
    </location>
    <ligand>
        <name>L-aspartate</name>
        <dbReference type="ChEBI" id="CHEBI:29991"/>
    </ligand>
</feature>
<feature type="binding site" evidence="1">
    <location>
        <position position="224"/>
    </location>
    <ligand>
        <name>L-aspartate</name>
        <dbReference type="ChEBI" id="CHEBI:29991"/>
    </ligand>
</feature>
<feature type="binding site" evidence="1">
    <location>
        <position position="265"/>
    </location>
    <ligand>
        <name>carbamoyl phosphate</name>
        <dbReference type="ChEBI" id="CHEBI:58228"/>
    </ligand>
</feature>
<feature type="binding site" evidence="1">
    <location>
        <position position="266"/>
    </location>
    <ligand>
        <name>carbamoyl phosphate</name>
        <dbReference type="ChEBI" id="CHEBI:58228"/>
    </ligand>
</feature>
<dbReference type="EC" id="2.1.3.2" evidence="1"/>
<dbReference type="EMBL" id="CP000056">
    <property type="protein sequence ID" value="AAX71735.1"/>
    <property type="status" value="ALT_INIT"/>
    <property type="molecule type" value="Genomic_DNA"/>
</dbReference>
<dbReference type="RefSeq" id="WP_004218947.1">
    <property type="nucleotide sequence ID" value="NC_007296.2"/>
</dbReference>
<dbReference type="SMR" id="Q48U71"/>
<dbReference type="KEGG" id="spb:M28_Spy0621"/>
<dbReference type="HOGENOM" id="CLU_043846_2_1_9"/>
<dbReference type="UniPathway" id="UPA00070">
    <property type="reaction ID" value="UER00116"/>
</dbReference>
<dbReference type="GO" id="GO:0005829">
    <property type="term" value="C:cytosol"/>
    <property type="evidence" value="ECO:0007669"/>
    <property type="project" value="TreeGrafter"/>
</dbReference>
<dbReference type="GO" id="GO:0016597">
    <property type="term" value="F:amino acid binding"/>
    <property type="evidence" value="ECO:0007669"/>
    <property type="project" value="InterPro"/>
</dbReference>
<dbReference type="GO" id="GO:0004070">
    <property type="term" value="F:aspartate carbamoyltransferase activity"/>
    <property type="evidence" value="ECO:0007669"/>
    <property type="project" value="UniProtKB-UniRule"/>
</dbReference>
<dbReference type="GO" id="GO:0006207">
    <property type="term" value="P:'de novo' pyrimidine nucleobase biosynthetic process"/>
    <property type="evidence" value="ECO:0007669"/>
    <property type="project" value="InterPro"/>
</dbReference>
<dbReference type="GO" id="GO:0044205">
    <property type="term" value="P:'de novo' UMP biosynthetic process"/>
    <property type="evidence" value="ECO:0007669"/>
    <property type="project" value="UniProtKB-UniRule"/>
</dbReference>
<dbReference type="GO" id="GO:0006520">
    <property type="term" value="P:amino acid metabolic process"/>
    <property type="evidence" value="ECO:0007669"/>
    <property type="project" value="InterPro"/>
</dbReference>
<dbReference type="FunFam" id="3.40.50.1370:FF:000011">
    <property type="entry name" value="Aspartate carbamoyltransferase"/>
    <property type="match status" value="1"/>
</dbReference>
<dbReference type="Gene3D" id="3.40.50.1370">
    <property type="entry name" value="Aspartate/ornithine carbamoyltransferase"/>
    <property type="match status" value="2"/>
</dbReference>
<dbReference type="HAMAP" id="MF_00001">
    <property type="entry name" value="Asp_carb_tr"/>
    <property type="match status" value="1"/>
</dbReference>
<dbReference type="InterPro" id="IPR006132">
    <property type="entry name" value="Asp/Orn_carbamoyltranf_P-bd"/>
</dbReference>
<dbReference type="InterPro" id="IPR006130">
    <property type="entry name" value="Asp/Orn_carbamoylTrfase"/>
</dbReference>
<dbReference type="InterPro" id="IPR036901">
    <property type="entry name" value="Asp/Orn_carbamoylTrfase_sf"/>
</dbReference>
<dbReference type="InterPro" id="IPR002082">
    <property type="entry name" value="Asp_carbamoyltransf"/>
</dbReference>
<dbReference type="InterPro" id="IPR006131">
    <property type="entry name" value="Asp_carbamoyltransf_Asp/Orn-bd"/>
</dbReference>
<dbReference type="NCBIfam" id="TIGR00670">
    <property type="entry name" value="asp_carb_tr"/>
    <property type="match status" value="1"/>
</dbReference>
<dbReference type="NCBIfam" id="NF002032">
    <property type="entry name" value="PRK00856.1"/>
    <property type="match status" value="1"/>
</dbReference>
<dbReference type="PANTHER" id="PTHR45753:SF6">
    <property type="entry name" value="ASPARTATE CARBAMOYLTRANSFERASE"/>
    <property type="match status" value="1"/>
</dbReference>
<dbReference type="PANTHER" id="PTHR45753">
    <property type="entry name" value="ORNITHINE CARBAMOYLTRANSFERASE, MITOCHONDRIAL"/>
    <property type="match status" value="1"/>
</dbReference>
<dbReference type="Pfam" id="PF00185">
    <property type="entry name" value="OTCace"/>
    <property type="match status" value="1"/>
</dbReference>
<dbReference type="Pfam" id="PF02729">
    <property type="entry name" value="OTCace_N"/>
    <property type="match status" value="1"/>
</dbReference>
<dbReference type="PRINTS" id="PR00100">
    <property type="entry name" value="AOTCASE"/>
</dbReference>
<dbReference type="PRINTS" id="PR00101">
    <property type="entry name" value="ATCASE"/>
</dbReference>
<dbReference type="SUPFAM" id="SSF53671">
    <property type="entry name" value="Aspartate/ornithine carbamoyltransferase"/>
    <property type="match status" value="1"/>
</dbReference>
<dbReference type="PROSITE" id="PS00097">
    <property type="entry name" value="CARBAMOYLTRANSFERASE"/>
    <property type="match status" value="1"/>
</dbReference>
<comment type="function">
    <text evidence="1">Catalyzes the condensation of carbamoyl phosphate and aspartate to form carbamoyl aspartate and inorganic phosphate, the committed step in the de novo pyrimidine nucleotide biosynthesis pathway.</text>
</comment>
<comment type="catalytic activity">
    <reaction evidence="1">
        <text>carbamoyl phosphate + L-aspartate = N-carbamoyl-L-aspartate + phosphate + H(+)</text>
        <dbReference type="Rhea" id="RHEA:20013"/>
        <dbReference type="ChEBI" id="CHEBI:15378"/>
        <dbReference type="ChEBI" id="CHEBI:29991"/>
        <dbReference type="ChEBI" id="CHEBI:32814"/>
        <dbReference type="ChEBI" id="CHEBI:43474"/>
        <dbReference type="ChEBI" id="CHEBI:58228"/>
        <dbReference type="EC" id="2.1.3.2"/>
    </reaction>
</comment>
<comment type="pathway">
    <text evidence="1">Pyrimidine metabolism; UMP biosynthesis via de novo pathway; (S)-dihydroorotate from bicarbonate: step 2/3.</text>
</comment>
<comment type="subunit">
    <text evidence="1">Heterododecamer (2C3:3R2) of six catalytic PyrB chains organized as two trimers (C3), and six regulatory PyrI chains organized as three dimers (R2).</text>
</comment>
<comment type="similarity">
    <text evidence="1">Belongs to the aspartate/ornithine carbamoyltransferase superfamily. ATCase family.</text>
</comment>
<comment type="sequence caution" evidence="2">
    <conflict type="erroneous initiation">
        <sequence resource="EMBL-CDS" id="AAX71735"/>
    </conflict>
</comment>
<sequence length="311" mass="34615">MSVVNNRVALTNLVSMEALTTEEVLGLINRGSEYKAGKVVISDHQKDLVANLFFENSTRTHKSFEVAEKKLGLTVLDFNADASAVNKGESLYDTVLTMSALGTDICVIRHPEDDYYKELVESPTITASIVNGGDGSGQHPSQCLLDLLTIYEEFGRFEGLKIAIAGDLTHSRVAKSNMQILKRLGAELYFYGPEEWYSEAFNAYGTYIAIDQIIKELDVLMLLRVQHERHDGHQSFSKEGYHQAFGLTQERYQQLKDSAIIMHPAPVNRDVEIADSLVEAPKARIVSQMANGVFVRMAIIEAILNGRNKNS</sequence>
<organism>
    <name type="scientific">Streptococcus pyogenes serotype M28 (strain MGAS6180)</name>
    <dbReference type="NCBI Taxonomy" id="319701"/>
    <lineage>
        <taxon>Bacteria</taxon>
        <taxon>Bacillati</taxon>
        <taxon>Bacillota</taxon>
        <taxon>Bacilli</taxon>
        <taxon>Lactobacillales</taxon>
        <taxon>Streptococcaceae</taxon>
        <taxon>Streptococcus</taxon>
    </lineage>
</organism>
<gene>
    <name evidence="1" type="primary">pyrB</name>
    <name type="ordered locus">M28_Spy0621</name>
</gene>
<name>PYRB_STRPM</name>
<accession>Q48U71</accession>
<reference key="1">
    <citation type="journal article" date="2005" name="J. Infect. Dis.">
        <title>Genome sequence of a serotype M28 strain of group A Streptococcus: potential new insights into puerperal sepsis and bacterial disease specificity.</title>
        <authorList>
            <person name="Green N.M."/>
            <person name="Zhang S."/>
            <person name="Porcella S.F."/>
            <person name="Nagiec M.J."/>
            <person name="Barbian K.D."/>
            <person name="Beres S.B."/>
            <person name="Lefebvre R.B."/>
            <person name="Musser J.M."/>
        </authorList>
    </citation>
    <scope>NUCLEOTIDE SEQUENCE [LARGE SCALE GENOMIC DNA]</scope>
    <source>
        <strain>MGAS6180</strain>
    </source>
</reference>
<protein>
    <recommendedName>
        <fullName evidence="1">Aspartate carbamoyltransferase catalytic subunit</fullName>
        <ecNumber evidence="1">2.1.3.2</ecNumber>
    </recommendedName>
    <alternativeName>
        <fullName evidence="1">Aspartate transcarbamylase</fullName>
        <shortName evidence="1">ATCase</shortName>
    </alternativeName>
</protein>
<evidence type="ECO:0000255" key="1">
    <source>
        <dbReference type="HAMAP-Rule" id="MF_00001"/>
    </source>
</evidence>
<evidence type="ECO:0000305" key="2"/>